<dbReference type="EC" id="6.1.1.5" evidence="1"/>
<dbReference type="EMBL" id="CR378664">
    <property type="protein sequence ID" value="CAG19014.1"/>
    <property type="molecule type" value="Genomic_DNA"/>
</dbReference>
<dbReference type="RefSeq" id="WP_011217364.1">
    <property type="nucleotide sequence ID" value="NC_006370.1"/>
</dbReference>
<dbReference type="SMR" id="Q6LUL1"/>
<dbReference type="STRING" id="298386.PBPRA0591"/>
<dbReference type="KEGG" id="ppr:PBPRA0591"/>
<dbReference type="eggNOG" id="COG0060">
    <property type="taxonomic scope" value="Bacteria"/>
</dbReference>
<dbReference type="HOGENOM" id="CLU_001493_7_0_6"/>
<dbReference type="Proteomes" id="UP000000593">
    <property type="component" value="Chromosome 1"/>
</dbReference>
<dbReference type="GO" id="GO:0005829">
    <property type="term" value="C:cytosol"/>
    <property type="evidence" value="ECO:0007669"/>
    <property type="project" value="TreeGrafter"/>
</dbReference>
<dbReference type="GO" id="GO:0002161">
    <property type="term" value="F:aminoacyl-tRNA deacylase activity"/>
    <property type="evidence" value="ECO:0007669"/>
    <property type="project" value="InterPro"/>
</dbReference>
<dbReference type="GO" id="GO:0005524">
    <property type="term" value="F:ATP binding"/>
    <property type="evidence" value="ECO:0007669"/>
    <property type="project" value="UniProtKB-UniRule"/>
</dbReference>
<dbReference type="GO" id="GO:0004822">
    <property type="term" value="F:isoleucine-tRNA ligase activity"/>
    <property type="evidence" value="ECO:0007669"/>
    <property type="project" value="UniProtKB-UniRule"/>
</dbReference>
<dbReference type="GO" id="GO:0000049">
    <property type="term" value="F:tRNA binding"/>
    <property type="evidence" value="ECO:0007669"/>
    <property type="project" value="InterPro"/>
</dbReference>
<dbReference type="GO" id="GO:0008270">
    <property type="term" value="F:zinc ion binding"/>
    <property type="evidence" value="ECO:0007669"/>
    <property type="project" value="UniProtKB-UniRule"/>
</dbReference>
<dbReference type="GO" id="GO:0006428">
    <property type="term" value="P:isoleucyl-tRNA aminoacylation"/>
    <property type="evidence" value="ECO:0007669"/>
    <property type="project" value="UniProtKB-UniRule"/>
</dbReference>
<dbReference type="CDD" id="cd07960">
    <property type="entry name" value="Anticodon_Ia_Ile_BEm"/>
    <property type="match status" value="1"/>
</dbReference>
<dbReference type="CDD" id="cd00818">
    <property type="entry name" value="IleRS_core"/>
    <property type="match status" value="1"/>
</dbReference>
<dbReference type="FunFam" id="1.10.730.20:FF:000001">
    <property type="entry name" value="Isoleucine--tRNA ligase"/>
    <property type="match status" value="1"/>
</dbReference>
<dbReference type="FunFam" id="3.40.50.620:FF:000048">
    <property type="entry name" value="Isoleucine--tRNA ligase"/>
    <property type="match status" value="1"/>
</dbReference>
<dbReference type="FunFam" id="3.40.50.620:FF:000168">
    <property type="entry name" value="Isoleucine--tRNA ligase"/>
    <property type="match status" value="1"/>
</dbReference>
<dbReference type="Gene3D" id="1.10.730.20">
    <property type="match status" value="1"/>
</dbReference>
<dbReference type="Gene3D" id="3.40.50.620">
    <property type="entry name" value="HUPs"/>
    <property type="match status" value="2"/>
</dbReference>
<dbReference type="HAMAP" id="MF_02002">
    <property type="entry name" value="Ile_tRNA_synth_type1"/>
    <property type="match status" value="1"/>
</dbReference>
<dbReference type="InterPro" id="IPR001412">
    <property type="entry name" value="aa-tRNA-synth_I_CS"/>
</dbReference>
<dbReference type="InterPro" id="IPR002300">
    <property type="entry name" value="aa-tRNA-synth_Ia"/>
</dbReference>
<dbReference type="InterPro" id="IPR033708">
    <property type="entry name" value="Anticodon_Ile_BEm"/>
</dbReference>
<dbReference type="InterPro" id="IPR002301">
    <property type="entry name" value="Ile-tRNA-ligase"/>
</dbReference>
<dbReference type="InterPro" id="IPR023585">
    <property type="entry name" value="Ile-tRNA-ligase_type1"/>
</dbReference>
<dbReference type="InterPro" id="IPR050081">
    <property type="entry name" value="Ile-tRNA_ligase"/>
</dbReference>
<dbReference type="InterPro" id="IPR013155">
    <property type="entry name" value="M/V/L/I-tRNA-synth_anticd-bd"/>
</dbReference>
<dbReference type="InterPro" id="IPR014729">
    <property type="entry name" value="Rossmann-like_a/b/a_fold"/>
</dbReference>
<dbReference type="InterPro" id="IPR009080">
    <property type="entry name" value="tRNAsynth_Ia_anticodon-bd"/>
</dbReference>
<dbReference type="InterPro" id="IPR009008">
    <property type="entry name" value="Val/Leu/Ile-tRNA-synth_edit"/>
</dbReference>
<dbReference type="InterPro" id="IPR010663">
    <property type="entry name" value="Znf_FPG/IleRS"/>
</dbReference>
<dbReference type="NCBIfam" id="TIGR00392">
    <property type="entry name" value="ileS"/>
    <property type="match status" value="1"/>
</dbReference>
<dbReference type="PANTHER" id="PTHR42765:SF1">
    <property type="entry name" value="ISOLEUCINE--TRNA LIGASE, MITOCHONDRIAL"/>
    <property type="match status" value="1"/>
</dbReference>
<dbReference type="PANTHER" id="PTHR42765">
    <property type="entry name" value="SOLEUCYL-TRNA SYNTHETASE"/>
    <property type="match status" value="1"/>
</dbReference>
<dbReference type="Pfam" id="PF08264">
    <property type="entry name" value="Anticodon_1"/>
    <property type="match status" value="1"/>
</dbReference>
<dbReference type="Pfam" id="PF00133">
    <property type="entry name" value="tRNA-synt_1"/>
    <property type="match status" value="1"/>
</dbReference>
<dbReference type="Pfam" id="PF06827">
    <property type="entry name" value="zf-FPG_IleRS"/>
    <property type="match status" value="1"/>
</dbReference>
<dbReference type="PRINTS" id="PR00984">
    <property type="entry name" value="TRNASYNTHILE"/>
</dbReference>
<dbReference type="SUPFAM" id="SSF47323">
    <property type="entry name" value="Anticodon-binding domain of a subclass of class I aminoacyl-tRNA synthetases"/>
    <property type="match status" value="1"/>
</dbReference>
<dbReference type="SUPFAM" id="SSF52374">
    <property type="entry name" value="Nucleotidylyl transferase"/>
    <property type="match status" value="1"/>
</dbReference>
<dbReference type="SUPFAM" id="SSF50677">
    <property type="entry name" value="ValRS/IleRS/LeuRS editing domain"/>
    <property type="match status" value="1"/>
</dbReference>
<dbReference type="PROSITE" id="PS00178">
    <property type="entry name" value="AA_TRNA_LIGASE_I"/>
    <property type="match status" value="1"/>
</dbReference>
<gene>
    <name evidence="1" type="primary">ileS</name>
    <name type="ordered locus">PBPRA0591</name>
</gene>
<sequence length="954" mass="106622">MSDYKDTLNLPETGFPMRGNLAQREPVMLKRWDDEDLYGEIRKAKKGNKSFILHDGPPYANGDIHIGHALNKILKDIIIKSKTLSGFDAPYIPGWDCHGLPIELMVEKKWGKPGRKLTAAEFRQKCREYAAGQVEGQKESFIRLGVLGQWDKPYRTMDFATEANIIRSLGKVAENDHLLKGFKPVHWCTDCGSALAEAEVEYQDKVSPSIDVKFKAVDEAGVVAKFNCAEGHEGQGDVSVVIWTTTPWTMPANRAVAVRDDLEYVLVQVEADAANDKAAYRLIVAAELAKDVMDRAGIEHFHNLGFCKGADLELMRFNHPFYSFDVPIVLGDHVTTESGTGCVHTAPGHGQEDFVVGQKYGLEIANPVGSNGVYLPDTELFAGQHVFKANDVVVETLKEHGALLHHHAYEHSYPHCWRHKTPIIFRATPQWFISMDKAGLRAKALGEIKNVQWLPEWGQSRIEGMVEGRPEWCISRQRTWGVPIALFVHKETQELHPDTRVLIEKVAQLVEQKGIQAWWDLNPAELMGEADAANYEKVLDTLDVWFDSGVTHFSVVDSREEYNGHSADLYLEGSDQHRGWFQSSLVSSVAMKGKAPYNQVLTHGFVVDGQGRKMSKSVGNVVAPKDVTNKLGADILRLWVASTDYTGEVAVSDEILKRSADAYRRIRNTARFFLANLNGFNPETDLVAPEEMVALDRWAVGRAMEAQEEIIKAYDGYNLHGVTQRLMQFCSVEMGSFYLDVIKDRQYTAKQGGHAQRSCQTALFYIVEALVRWMAPIMSFTADEIWNEMPASQGNGEQRDKFVFTGEWFEGLFGLADDEVMNDEFWAEIQQVRGAVNKLLELARKDKVIGGSLQAEITLHANETLAAKLNTLEDELRFVLLTSKAAVAITDSMPEGAQKTDVEGLFVTVNASEAAKCDRCWHHVADVGTIEGHEEVCGRCVTNISGEGEERKFA</sequence>
<organism>
    <name type="scientific">Photobacterium profundum (strain SS9)</name>
    <dbReference type="NCBI Taxonomy" id="298386"/>
    <lineage>
        <taxon>Bacteria</taxon>
        <taxon>Pseudomonadati</taxon>
        <taxon>Pseudomonadota</taxon>
        <taxon>Gammaproteobacteria</taxon>
        <taxon>Vibrionales</taxon>
        <taxon>Vibrionaceae</taxon>
        <taxon>Photobacterium</taxon>
    </lineage>
</organism>
<reference key="1">
    <citation type="journal article" date="2005" name="Science">
        <title>Life at depth: Photobacterium profundum genome sequence and expression analysis.</title>
        <authorList>
            <person name="Vezzi A."/>
            <person name="Campanaro S."/>
            <person name="D'Angelo M."/>
            <person name="Simonato F."/>
            <person name="Vitulo N."/>
            <person name="Lauro F.M."/>
            <person name="Cestaro A."/>
            <person name="Malacrida G."/>
            <person name="Simionati B."/>
            <person name="Cannata N."/>
            <person name="Romualdi C."/>
            <person name="Bartlett D.H."/>
            <person name="Valle G."/>
        </authorList>
    </citation>
    <scope>NUCLEOTIDE SEQUENCE [LARGE SCALE GENOMIC DNA]</scope>
    <source>
        <strain>ATCC BAA-1253 / SS9</strain>
    </source>
</reference>
<protein>
    <recommendedName>
        <fullName evidence="1">Isoleucine--tRNA ligase</fullName>
        <ecNumber evidence="1">6.1.1.5</ecNumber>
    </recommendedName>
    <alternativeName>
        <fullName evidence="1">Isoleucyl-tRNA synthetase</fullName>
        <shortName evidence="1">IleRS</shortName>
    </alternativeName>
</protein>
<comment type="function">
    <text evidence="1">Catalyzes the attachment of isoleucine to tRNA(Ile). As IleRS can inadvertently accommodate and process structurally similar amino acids such as valine, to avoid such errors it has two additional distinct tRNA(Ile)-dependent editing activities. One activity is designated as 'pretransfer' editing and involves the hydrolysis of activated Val-AMP. The other activity is designated 'posttransfer' editing and involves deacylation of mischarged Val-tRNA(Ile).</text>
</comment>
<comment type="catalytic activity">
    <reaction evidence="1">
        <text>tRNA(Ile) + L-isoleucine + ATP = L-isoleucyl-tRNA(Ile) + AMP + diphosphate</text>
        <dbReference type="Rhea" id="RHEA:11060"/>
        <dbReference type="Rhea" id="RHEA-COMP:9666"/>
        <dbReference type="Rhea" id="RHEA-COMP:9695"/>
        <dbReference type="ChEBI" id="CHEBI:30616"/>
        <dbReference type="ChEBI" id="CHEBI:33019"/>
        <dbReference type="ChEBI" id="CHEBI:58045"/>
        <dbReference type="ChEBI" id="CHEBI:78442"/>
        <dbReference type="ChEBI" id="CHEBI:78528"/>
        <dbReference type="ChEBI" id="CHEBI:456215"/>
        <dbReference type="EC" id="6.1.1.5"/>
    </reaction>
</comment>
<comment type="cofactor">
    <cofactor evidence="1">
        <name>Zn(2+)</name>
        <dbReference type="ChEBI" id="CHEBI:29105"/>
    </cofactor>
    <text evidence="1">Binds 1 zinc ion per subunit.</text>
</comment>
<comment type="subunit">
    <text evidence="1">Monomer.</text>
</comment>
<comment type="subcellular location">
    <subcellularLocation>
        <location evidence="1">Cytoplasm</location>
    </subcellularLocation>
</comment>
<comment type="domain">
    <text evidence="1">IleRS has two distinct active sites: one for aminoacylation and one for editing. The misactivated valine is translocated from the active site to the editing site, which sterically excludes the correctly activated isoleucine. The single editing site contains two valyl binding pockets, one specific for each substrate (Val-AMP or Val-tRNA(Ile)).</text>
</comment>
<comment type="similarity">
    <text evidence="1">Belongs to the class-I aminoacyl-tRNA synthetase family. IleS type 1 subfamily.</text>
</comment>
<accession>Q6LUL1</accession>
<evidence type="ECO:0000255" key="1">
    <source>
        <dbReference type="HAMAP-Rule" id="MF_02002"/>
    </source>
</evidence>
<proteinExistence type="inferred from homology"/>
<name>SYI_PHOPR</name>
<keyword id="KW-0030">Aminoacyl-tRNA synthetase</keyword>
<keyword id="KW-0067">ATP-binding</keyword>
<keyword id="KW-0963">Cytoplasm</keyword>
<keyword id="KW-0436">Ligase</keyword>
<keyword id="KW-0479">Metal-binding</keyword>
<keyword id="KW-0547">Nucleotide-binding</keyword>
<keyword id="KW-0648">Protein biosynthesis</keyword>
<keyword id="KW-1185">Reference proteome</keyword>
<keyword id="KW-0862">Zinc</keyword>
<feature type="chain" id="PRO_0000098437" description="Isoleucine--tRNA ligase">
    <location>
        <begin position="1"/>
        <end position="954"/>
    </location>
</feature>
<feature type="short sequence motif" description="'HIGH' region">
    <location>
        <begin position="58"/>
        <end position="68"/>
    </location>
</feature>
<feature type="short sequence motif" description="'KMSKS' region">
    <location>
        <begin position="613"/>
        <end position="617"/>
    </location>
</feature>
<feature type="binding site" evidence="1">
    <location>
        <position position="572"/>
    </location>
    <ligand>
        <name>L-isoleucyl-5'-AMP</name>
        <dbReference type="ChEBI" id="CHEBI:178002"/>
    </ligand>
</feature>
<feature type="binding site" evidence="1">
    <location>
        <position position="616"/>
    </location>
    <ligand>
        <name>ATP</name>
        <dbReference type="ChEBI" id="CHEBI:30616"/>
    </ligand>
</feature>
<feature type="binding site" evidence="1">
    <location>
        <position position="917"/>
    </location>
    <ligand>
        <name>Zn(2+)</name>
        <dbReference type="ChEBI" id="CHEBI:29105"/>
    </ligand>
</feature>
<feature type="binding site" evidence="1">
    <location>
        <position position="920"/>
    </location>
    <ligand>
        <name>Zn(2+)</name>
        <dbReference type="ChEBI" id="CHEBI:29105"/>
    </ligand>
</feature>
<feature type="binding site" evidence="1">
    <location>
        <position position="937"/>
    </location>
    <ligand>
        <name>Zn(2+)</name>
        <dbReference type="ChEBI" id="CHEBI:29105"/>
    </ligand>
</feature>
<feature type="binding site" evidence="1">
    <location>
        <position position="940"/>
    </location>
    <ligand>
        <name>Zn(2+)</name>
        <dbReference type="ChEBI" id="CHEBI:29105"/>
    </ligand>
</feature>